<comment type="function">
    <text evidence="4">High-affinity H(+)/sulfate cotransporter that mediates the loading of sulfate into the sieve tube. Plays a central role in the regulation of sulfate assimilation.</text>
</comment>
<comment type="subcellular location">
    <subcellularLocation>
        <location evidence="5">Membrane</location>
        <topology evidence="5">Multi-pass membrane protein</topology>
    </subcellularLocation>
</comment>
<comment type="tissue specificity">
    <text evidence="4">Expressed in the phloem of cotyledons, hypocotyls and roots.</text>
</comment>
<comment type="induction">
    <text evidence="4">In roots and leaves by sulfate starvation.</text>
</comment>
<comment type="miscellaneous">
    <text>Loss-of-function mutation of the gene result in an attenuation of the source-to-sink transport of sulfate.</text>
</comment>
<comment type="similarity">
    <text evidence="5">Belongs to the SLC26A/SulP transporter (TC 2.A.53) family.</text>
</comment>
<comment type="sequence caution" evidence="5">
    <conflict type="erroneous gene model prediction">
        <sequence resource="EMBL-CDS" id="AAF86552"/>
    </conflict>
</comment>
<protein>
    <recommendedName>
        <fullName>Sulfate transporter 1.3</fullName>
    </recommendedName>
</protein>
<feature type="chain" id="PRO_0000080174" description="Sulfate transporter 1.3">
    <location>
        <begin position="1"/>
        <end position="656"/>
    </location>
</feature>
<feature type="topological domain" description="Cytoplasmic" evidence="1">
    <location>
        <begin position="1"/>
        <end position="94"/>
    </location>
</feature>
<feature type="transmembrane region" description="Helical" evidence="1">
    <location>
        <begin position="95"/>
        <end position="115"/>
    </location>
</feature>
<feature type="topological domain" description="Extracellular" evidence="1">
    <location>
        <begin position="116"/>
        <end position="119"/>
    </location>
</feature>
<feature type="transmembrane region" description="Helical" evidence="1">
    <location>
        <begin position="120"/>
        <end position="140"/>
    </location>
</feature>
<feature type="topological domain" description="Cytoplasmic" evidence="1">
    <location>
        <begin position="141"/>
        <end position="144"/>
    </location>
</feature>
<feature type="transmembrane region" description="Helical" evidence="1">
    <location>
        <begin position="145"/>
        <end position="165"/>
    </location>
</feature>
<feature type="topological domain" description="Extracellular" evidence="1">
    <location>
        <begin position="166"/>
        <end position="176"/>
    </location>
</feature>
<feature type="transmembrane region" description="Helical" evidence="1">
    <location>
        <begin position="177"/>
        <end position="197"/>
    </location>
</feature>
<feature type="transmembrane region" description="Helical" evidence="1">
    <location>
        <begin position="198"/>
        <end position="218"/>
    </location>
</feature>
<feature type="topological domain" description="Extracellular" evidence="1">
    <location>
        <begin position="219"/>
        <end position="256"/>
    </location>
</feature>
<feature type="transmembrane region" description="Helical" evidence="1">
    <location>
        <begin position="257"/>
        <end position="277"/>
    </location>
</feature>
<feature type="topological domain" description="Cytoplasmic" evidence="1">
    <location>
        <begin position="278"/>
        <end position="283"/>
    </location>
</feature>
<feature type="transmembrane region" description="Helical" evidence="1">
    <location>
        <begin position="284"/>
        <end position="304"/>
    </location>
</feature>
<feature type="topological domain" description="Extracellular" evidence="1">
    <location>
        <begin position="305"/>
        <end position="342"/>
    </location>
</feature>
<feature type="transmembrane region" description="Helical" evidence="1">
    <location>
        <begin position="343"/>
        <end position="363"/>
    </location>
</feature>
<feature type="topological domain" description="Cytoplasmic" evidence="1">
    <location>
        <begin position="364"/>
        <end position="375"/>
    </location>
</feature>
<feature type="transmembrane region" description="Helical" evidence="1">
    <location>
        <begin position="376"/>
        <end position="396"/>
    </location>
</feature>
<feature type="topological domain" description="Extracellular" evidence="1">
    <location>
        <begin position="397"/>
        <end position="412"/>
    </location>
</feature>
<feature type="transmembrane region" description="Helical" evidence="1">
    <location>
        <begin position="413"/>
        <end position="433"/>
    </location>
</feature>
<feature type="topological domain" description="Cytoplasmic" evidence="1">
    <location>
        <begin position="434"/>
        <end position="441"/>
    </location>
</feature>
<feature type="transmembrane region" description="Helical" evidence="1">
    <location>
        <begin position="442"/>
        <end position="462"/>
    </location>
</feature>
<feature type="topological domain" description="Extracellular" evidence="1">
    <location>
        <begin position="463"/>
        <end position="473"/>
    </location>
</feature>
<feature type="transmembrane region" description="Helical" evidence="1">
    <location>
        <begin position="474"/>
        <end position="494"/>
    </location>
</feature>
<feature type="topological domain" description="Cytoplasmic" evidence="1">
    <location>
        <begin position="495"/>
        <end position="656"/>
    </location>
</feature>
<feature type="domain" description="STAS" evidence="2">
    <location>
        <begin position="525"/>
        <end position="648"/>
    </location>
</feature>
<feature type="region of interest" description="Disordered" evidence="3">
    <location>
        <begin position="1"/>
        <end position="30"/>
    </location>
</feature>
<keyword id="KW-0472">Membrane</keyword>
<keyword id="KW-1185">Reference proteome</keyword>
<keyword id="KW-0764">Sulfate transport</keyword>
<keyword id="KW-0769">Symport</keyword>
<keyword id="KW-0812">Transmembrane</keyword>
<keyword id="KW-1133">Transmembrane helix</keyword>
<keyword id="KW-0813">Transport</keyword>
<sequence>MSARAHPVDDDGEISPVERSSPRQANTPYVHKVEVPPKQNLFNEFMYTFKETFFHDDPLRHFKDQSKSKKLMLGIQSVFPVIEWGRKYNLKLFRGDLIAGLTIASLCIPQDIGYAKLASLDPKYGLYSSFVPPLVYACMGSSKDIAIGPVAVVSLLLGTLLRAEIDPNTNPNEYLRLAFTSTFFAGVTQAALGFFRLGFLIDFLSHAAVVGFMGGAAITIALQQLKGFLGINKFTKKTDIIAVLSSVISSAHHGWNWQTILISASFLIFLLISKFIGKRNKKLFWIPAIAPLVSVIISTFFVYITRADKKGVQIVKHLDKGLNPSSLRLIYFSGDYLLKGFRIGVVSGMVALTEAVAIGRTFAAMKDYQIDGNKEMVALGAMNVIGSMTSCYVSTGSFSRSAVNFMAGCQTAVSNIIMSIVVLLTLLFLTPLFKYTPNAILAAIIINAVIPLVDVNATILIFKIDKLDFVACMGAFFGVIFVSVEIGLLIAVGISFAKILLQVTRPRTAILGKIPGTSVYRNINQYPEATRIPGVLTIRVDSAIYFSNSNYVRERIQRWLTDEEEMVEAARLPRIQFLIIEMSPVTDIDTSGIHALEDLYKSLQKRDIQLVLANPGPPVINKLHVSHFADLIGHDKIFLTVAEAVDSCSPKLSDEV</sequence>
<reference key="1">
    <citation type="journal article" date="2003" name="Plant Physiol.">
        <title>Phloem-localizing sulfate transporter, sultr1;3, mediates re-distribution of sulfur from source to sink organs in Arabidopsis.</title>
        <authorList>
            <person name="Yoshimoto N."/>
            <person name="Inoue E."/>
            <person name="Saito K."/>
            <person name="Yamaya T."/>
            <person name="Takahashi H."/>
        </authorList>
    </citation>
    <scope>NUCLEOTIDE SEQUENCE [MRNA]</scope>
    <scope>FUNCTION</scope>
    <scope>TISSUE SPECIFICITY</scope>
    <scope>INDUCTION</scope>
    <scope>NULL MUTANT</scope>
    <source>
        <strain>cv. Columbia</strain>
    </source>
</reference>
<reference key="2">
    <citation type="journal article" date="2000" name="Nature">
        <title>Sequence and analysis of chromosome 1 of the plant Arabidopsis thaliana.</title>
        <authorList>
            <person name="Theologis A."/>
            <person name="Ecker J.R."/>
            <person name="Palm C.J."/>
            <person name="Federspiel N.A."/>
            <person name="Kaul S."/>
            <person name="White O."/>
            <person name="Alonso J."/>
            <person name="Altafi H."/>
            <person name="Araujo R."/>
            <person name="Bowman C.L."/>
            <person name="Brooks S.Y."/>
            <person name="Buehler E."/>
            <person name="Chan A."/>
            <person name="Chao Q."/>
            <person name="Chen H."/>
            <person name="Cheuk R.F."/>
            <person name="Chin C.W."/>
            <person name="Chung M.K."/>
            <person name="Conn L."/>
            <person name="Conway A.B."/>
            <person name="Conway A.R."/>
            <person name="Creasy T.H."/>
            <person name="Dewar K."/>
            <person name="Dunn P."/>
            <person name="Etgu P."/>
            <person name="Feldblyum T.V."/>
            <person name="Feng J.-D."/>
            <person name="Fong B."/>
            <person name="Fujii C.Y."/>
            <person name="Gill J.E."/>
            <person name="Goldsmith A.D."/>
            <person name="Haas B."/>
            <person name="Hansen N.F."/>
            <person name="Hughes B."/>
            <person name="Huizar L."/>
            <person name="Hunter J.L."/>
            <person name="Jenkins J."/>
            <person name="Johnson-Hopson C."/>
            <person name="Khan S."/>
            <person name="Khaykin E."/>
            <person name="Kim C.J."/>
            <person name="Koo H.L."/>
            <person name="Kremenetskaia I."/>
            <person name="Kurtz D.B."/>
            <person name="Kwan A."/>
            <person name="Lam B."/>
            <person name="Langin-Hooper S."/>
            <person name="Lee A."/>
            <person name="Lee J.M."/>
            <person name="Lenz C.A."/>
            <person name="Li J.H."/>
            <person name="Li Y.-P."/>
            <person name="Lin X."/>
            <person name="Liu S.X."/>
            <person name="Liu Z.A."/>
            <person name="Luros J.S."/>
            <person name="Maiti R."/>
            <person name="Marziali A."/>
            <person name="Militscher J."/>
            <person name="Miranda M."/>
            <person name="Nguyen M."/>
            <person name="Nierman W.C."/>
            <person name="Osborne B.I."/>
            <person name="Pai G."/>
            <person name="Peterson J."/>
            <person name="Pham P.K."/>
            <person name="Rizzo M."/>
            <person name="Rooney T."/>
            <person name="Rowley D."/>
            <person name="Sakano H."/>
            <person name="Salzberg S.L."/>
            <person name="Schwartz J.R."/>
            <person name="Shinn P."/>
            <person name="Southwick A.M."/>
            <person name="Sun H."/>
            <person name="Tallon L.J."/>
            <person name="Tambunga G."/>
            <person name="Toriumi M.J."/>
            <person name="Town C.D."/>
            <person name="Utterback T."/>
            <person name="Van Aken S."/>
            <person name="Vaysberg M."/>
            <person name="Vysotskaia V.S."/>
            <person name="Walker M."/>
            <person name="Wu D."/>
            <person name="Yu G."/>
            <person name="Fraser C.M."/>
            <person name="Venter J.C."/>
            <person name="Davis R.W."/>
        </authorList>
    </citation>
    <scope>NUCLEOTIDE SEQUENCE [LARGE SCALE GENOMIC DNA]</scope>
    <source>
        <strain>cv. Columbia</strain>
    </source>
</reference>
<reference key="3">
    <citation type="journal article" date="2017" name="Plant J.">
        <title>Araport11: a complete reannotation of the Arabidopsis thaliana reference genome.</title>
        <authorList>
            <person name="Cheng C.Y."/>
            <person name="Krishnakumar V."/>
            <person name="Chan A.P."/>
            <person name="Thibaud-Nissen F."/>
            <person name="Schobel S."/>
            <person name="Town C.D."/>
        </authorList>
    </citation>
    <scope>GENOME REANNOTATION</scope>
    <source>
        <strain>cv. Columbia</strain>
    </source>
</reference>
<gene>
    <name type="primary">SULTR1;3</name>
    <name type="ordered locus">At1g22150</name>
    <name type="ORF">F2E2.22</name>
</gene>
<accession>Q9FEP7</accession>
<accession>Q9LM44</accession>
<proteinExistence type="evidence at transcript level"/>
<name>SUT13_ARATH</name>
<organism>
    <name type="scientific">Arabidopsis thaliana</name>
    <name type="common">Mouse-ear cress</name>
    <dbReference type="NCBI Taxonomy" id="3702"/>
    <lineage>
        <taxon>Eukaryota</taxon>
        <taxon>Viridiplantae</taxon>
        <taxon>Streptophyta</taxon>
        <taxon>Embryophyta</taxon>
        <taxon>Tracheophyta</taxon>
        <taxon>Spermatophyta</taxon>
        <taxon>Magnoliopsida</taxon>
        <taxon>eudicotyledons</taxon>
        <taxon>Gunneridae</taxon>
        <taxon>Pentapetalae</taxon>
        <taxon>rosids</taxon>
        <taxon>malvids</taxon>
        <taxon>Brassicales</taxon>
        <taxon>Brassicaceae</taxon>
        <taxon>Camelineae</taxon>
        <taxon>Arabidopsis</taxon>
    </lineage>
</organism>
<dbReference type="EMBL" id="AB049624">
    <property type="protein sequence ID" value="BAB16410.1"/>
    <property type="molecule type" value="mRNA"/>
</dbReference>
<dbReference type="EMBL" id="AC069252">
    <property type="protein sequence ID" value="AAF86552.1"/>
    <property type="status" value="ALT_SEQ"/>
    <property type="molecule type" value="Genomic_DNA"/>
</dbReference>
<dbReference type="EMBL" id="CP002684">
    <property type="protein sequence ID" value="AEE30203.1"/>
    <property type="molecule type" value="Genomic_DNA"/>
</dbReference>
<dbReference type="EMBL" id="CP002684">
    <property type="protein sequence ID" value="ANM58633.1"/>
    <property type="molecule type" value="Genomic_DNA"/>
</dbReference>
<dbReference type="EMBL" id="CP002684">
    <property type="protein sequence ID" value="ANM58634.1"/>
    <property type="molecule type" value="Genomic_DNA"/>
</dbReference>
<dbReference type="PIR" id="B86354">
    <property type="entry name" value="B86354"/>
</dbReference>
<dbReference type="RefSeq" id="NP_001319061.1">
    <property type="nucleotide sequence ID" value="NM_001332538.1"/>
</dbReference>
<dbReference type="RefSeq" id="NP_001321055.1">
    <property type="nucleotide sequence ID" value="NM_001332540.1"/>
</dbReference>
<dbReference type="RefSeq" id="NP_564159.1">
    <property type="nucleotide sequence ID" value="NM_102065.2"/>
</dbReference>
<dbReference type="SMR" id="Q9FEP7"/>
<dbReference type="BioGRID" id="24059">
    <property type="interactions" value="19"/>
</dbReference>
<dbReference type="FunCoup" id="Q9FEP7">
    <property type="interactions" value="394"/>
</dbReference>
<dbReference type="IntAct" id="Q9FEP7">
    <property type="interactions" value="17"/>
</dbReference>
<dbReference type="STRING" id="3702.Q9FEP7"/>
<dbReference type="iPTMnet" id="Q9FEP7"/>
<dbReference type="PaxDb" id="3702-AT1G22150.1"/>
<dbReference type="ProteomicsDB" id="226754"/>
<dbReference type="EnsemblPlants" id="AT1G22150.1">
    <property type="protein sequence ID" value="AT1G22150.1"/>
    <property type="gene ID" value="AT1G22150"/>
</dbReference>
<dbReference type="EnsemblPlants" id="AT1G22150.3">
    <property type="protein sequence ID" value="AT1G22150.3"/>
    <property type="gene ID" value="AT1G22150"/>
</dbReference>
<dbReference type="EnsemblPlants" id="AT1G22150.4">
    <property type="protein sequence ID" value="AT1G22150.4"/>
    <property type="gene ID" value="AT1G22150"/>
</dbReference>
<dbReference type="GeneID" id="838820"/>
<dbReference type="Gramene" id="AT1G22150.1">
    <property type="protein sequence ID" value="AT1G22150.1"/>
    <property type="gene ID" value="AT1G22150"/>
</dbReference>
<dbReference type="Gramene" id="AT1G22150.3">
    <property type="protein sequence ID" value="AT1G22150.3"/>
    <property type="gene ID" value="AT1G22150"/>
</dbReference>
<dbReference type="Gramene" id="AT1G22150.4">
    <property type="protein sequence ID" value="AT1G22150.4"/>
    <property type="gene ID" value="AT1G22150"/>
</dbReference>
<dbReference type="KEGG" id="ath:AT1G22150"/>
<dbReference type="Araport" id="AT1G22150"/>
<dbReference type="TAIR" id="AT1G22150">
    <property type="gene designation" value="SULTR1"/>
</dbReference>
<dbReference type="eggNOG" id="KOG0236">
    <property type="taxonomic scope" value="Eukaryota"/>
</dbReference>
<dbReference type="HOGENOM" id="CLU_003182_13_2_1"/>
<dbReference type="InParanoid" id="Q9FEP7"/>
<dbReference type="OMA" id="ISWGIVH"/>
<dbReference type="OrthoDB" id="288203at2759"/>
<dbReference type="PhylomeDB" id="Q9FEP7"/>
<dbReference type="PRO" id="PR:Q9FEP7"/>
<dbReference type="Proteomes" id="UP000006548">
    <property type="component" value="Chromosome 1"/>
</dbReference>
<dbReference type="ExpressionAtlas" id="Q9FEP7">
    <property type="expression patterns" value="baseline and differential"/>
</dbReference>
<dbReference type="GO" id="GO:0016020">
    <property type="term" value="C:membrane"/>
    <property type="evidence" value="ECO:0007669"/>
    <property type="project" value="UniProtKB-SubCell"/>
</dbReference>
<dbReference type="GO" id="GO:0008271">
    <property type="term" value="F:secondary active sulfate transmembrane transporter activity"/>
    <property type="evidence" value="ECO:0007669"/>
    <property type="project" value="InterPro"/>
</dbReference>
<dbReference type="GO" id="GO:0015293">
    <property type="term" value="F:symporter activity"/>
    <property type="evidence" value="ECO:0007669"/>
    <property type="project" value="UniProtKB-KW"/>
</dbReference>
<dbReference type="CDD" id="cd07042">
    <property type="entry name" value="STAS_SulP_like_sulfate_transporter"/>
    <property type="match status" value="1"/>
</dbReference>
<dbReference type="FunFam" id="3.30.750.24:FF:000002">
    <property type="entry name" value="Sulfate transporter 31"/>
    <property type="match status" value="1"/>
</dbReference>
<dbReference type="Gene3D" id="3.30.750.24">
    <property type="entry name" value="STAS domain"/>
    <property type="match status" value="1"/>
</dbReference>
<dbReference type="InterPro" id="IPR018045">
    <property type="entry name" value="S04_transporter_CS"/>
</dbReference>
<dbReference type="InterPro" id="IPR011547">
    <property type="entry name" value="SLC26A/SulP_dom"/>
</dbReference>
<dbReference type="InterPro" id="IPR001902">
    <property type="entry name" value="SLC26A/SulP_fam"/>
</dbReference>
<dbReference type="InterPro" id="IPR002645">
    <property type="entry name" value="STAS_dom"/>
</dbReference>
<dbReference type="InterPro" id="IPR036513">
    <property type="entry name" value="STAS_dom_sf"/>
</dbReference>
<dbReference type="NCBIfam" id="TIGR00815">
    <property type="entry name" value="sulP"/>
    <property type="match status" value="1"/>
</dbReference>
<dbReference type="PANTHER" id="PTHR11814">
    <property type="entry name" value="SULFATE TRANSPORTER"/>
    <property type="match status" value="1"/>
</dbReference>
<dbReference type="Pfam" id="PF01740">
    <property type="entry name" value="STAS"/>
    <property type="match status" value="1"/>
</dbReference>
<dbReference type="Pfam" id="PF00916">
    <property type="entry name" value="Sulfate_transp"/>
    <property type="match status" value="1"/>
</dbReference>
<dbReference type="SUPFAM" id="SSF52091">
    <property type="entry name" value="SpoIIaa-like"/>
    <property type="match status" value="1"/>
</dbReference>
<dbReference type="PROSITE" id="PS01130">
    <property type="entry name" value="SLC26A"/>
    <property type="match status" value="1"/>
</dbReference>
<dbReference type="PROSITE" id="PS50801">
    <property type="entry name" value="STAS"/>
    <property type="match status" value="1"/>
</dbReference>
<evidence type="ECO:0000255" key="1"/>
<evidence type="ECO:0000255" key="2">
    <source>
        <dbReference type="PROSITE-ProRule" id="PRU00198"/>
    </source>
</evidence>
<evidence type="ECO:0000256" key="3">
    <source>
        <dbReference type="SAM" id="MobiDB-lite"/>
    </source>
</evidence>
<evidence type="ECO:0000269" key="4">
    <source>
    </source>
</evidence>
<evidence type="ECO:0000305" key="5"/>